<comment type="function">
    <text evidence="1">Converts the free carboxyl group of a malonyl-thioester to its methyl ester by transfer of a methyl group from S-adenosyl-L-methionine (SAM). It allows to synthesize pimeloyl-ACP via the fatty acid synthetic pathway.</text>
</comment>
<comment type="catalytic activity">
    <reaction evidence="1">
        <text>malonyl-[ACP] + S-adenosyl-L-methionine = malonyl-[ACP] methyl ester + S-adenosyl-L-homocysteine</text>
        <dbReference type="Rhea" id="RHEA:17105"/>
        <dbReference type="Rhea" id="RHEA-COMP:9623"/>
        <dbReference type="Rhea" id="RHEA-COMP:9954"/>
        <dbReference type="ChEBI" id="CHEBI:57856"/>
        <dbReference type="ChEBI" id="CHEBI:59789"/>
        <dbReference type="ChEBI" id="CHEBI:78449"/>
        <dbReference type="ChEBI" id="CHEBI:78845"/>
        <dbReference type="EC" id="2.1.1.197"/>
    </reaction>
</comment>
<comment type="pathway">
    <text evidence="1">Cofactor biosynthesis; biotin biosynthesis.</text>
</comment>
<comment type="similarity">
    <text evidence="1">Belongs to the methyltransferase superfamily.</text>
</comment>
<keyword id="KW-0093">Biotin biosynthesis</keyword>
<keyword id="KW-0489">Methyltransferase</keyword>
<keyword id="KW-1185">Reference proteome</keyword>
<keyword id="KW-0949">S-adenosyl-L-methionine</keyword>
<keyword id="KW-0808">Transferase</keyword>
<protein>
    <recommendedName>
        <fullName evidence="1">Malonyl-[acyl-carrier protein] O-methyltransferase</fullName>
        <shortName evidence="1">Malonyl-ACP O-methyltransferase</shortName>
        <ecNumber evidence="1">2.1.1.197</ecNumber>
    </recommendedName>
    <alternativeName>
        <fullName evidence="1">Biotin synthesis protein BioC</fullName>
    </alternativeName>
</protein>
<sequence>MFIDKQTVERHFSKSAHLYDGVNHVQRKMAHRLVQLLDEKRRDAKDEPRAILDIGCGTGWLTRECLKSFPQATIDAVDLSKQMLEVAEKNVSSHPNVQFIQGDIEKMVREKPSAKTYDVIVANAVFQWLDKPTETVAQLRSWLKPNGLLLFSTFGPDTFYELHDSFQLAAKQLGIIDERRGLDYLSKTEWKRTLDGLFAELTIHEEKAIESYATVEQFLHTVKKMGATYSQSSRPLSKRYYQLMKEIYEQRYRTEDSIPATYDCLYVLCQA</sequence>
<proteinExistence type="inferred from homology"/>
<dbReference type="EC" id="2.1.1.197" evidence="1"/>
<dbReference type="EMBL" id="BA000004">
    <property type="protein sequence ID" value="BAB07628.1"/>
    <property type="molecule type" value="Genomic_DNA"/>
</dbReference>
<dbReference type="PIR" id="E84138">
    <property type="entry name" value="E84138"/>
</dbReference>
<dbReference type="RefSeq" id="WP_010900034.1">
    <property type="nucleotide sequence ID" value="NC_002570.2"/>
</dbReference>
<dbReference type="SMR" id="Q9K623"/>
<dbReference type="STRING" id="272558.gene:10729822"/>
<dbReference type="KEGG" id="bha:BH3909"/>
<dbReference type="eggNOG" id="COG4106">
    <property type="taxonomic scope" value="Bacteria"/>
</dbReference>
<dbReference type="HOGENOM" id="CLU_046586_2_3_9"/>
<dbReference type="OrthoDB" id="9760689at2"/>
<dbReference type="UniPathway" id="UPA00078"/>
<dbReference type="Proteomes" id="UP000001258">
    <property type="component" value="Chromosome"/>
</dbReference>
<dbReference type="GO" id="GO:0010340">
    <property type="term" value="F:carboxyl-O-methyltransferase activity"/>
    <property type="evidence" value="ECO:0007669"/>
    <property type="project" value="UniProtKB-UniRule"/>
</dbReference>
<dbReference type="GO" id="GO:0102130">
    <property type="term" value="F:malonyl-CoA methyltransferase activity"/>
    <property type="evidence" value="ECO:0007669"/>
    <property type="project" value="UniProtKB-EC"/>
</dbReference>
<dbReference type="GO" id="GO:0009102">
    <property type="term" value="P:biotin biosynthetic process"/>
    <property type="evidence" value="ECO:0007669"/>
    <property type="project" value="UniProtKB-UniRule"/>
</dbReference>
<dbReference type="GO" id="GO:0032259">
    <property type="term" value="P:methylation"/>
    <property type="evidence" value="ECO:0007669"/>
    <property type="project" value="UniProtKB-KW"/>
</dbReference>
<dbReference type="CDD" id="cd02440">
    <property type="entry name" value="AdoMet_MTases"/>
    <property type="match status" value="1"/>
</dbReference>
<dbReference type="Gene3D" id="3.40.50.150">
    <property type="entry name" value="Vaccinia Virus protein VP39"/>
    <property type="match status" value="1"/>
</dbReference>
<dbReference type="HAMAP" id="MF_00835">
    <property type="entry name" value="BioC"/>
    <property type="match status" value="1"/>
</dbReference>
<dbReference type="InterPro" id="IPR011814">
    <property type="entry name" value="BioC"/>
</dbReference>
<dbReference type="InterPro" id="IPR029063">
    <property type="entry name" value="SAM-dependent_MTases_sf"/>
</dbReference>
<dbReference type="NCBIfam" id="TIGR02072">
    <property type="entry name" value="BioC"/>
    <property type="match status" value="1"/>
</dbReference>
<dbReference type="PANTHER" id="PTHR43861:SF1">
    <property type="entry name" value="TRANS-ACONITATE 2-METHYLTRANSFERASE"/>
    <property type="match status" value="1"/>
</dbReference>
<dbReference type="PANTHER" id="PTHR43861">
    <property type="entry name" value="TRANS-ACONITATE 2-METHYLTRANSFERASE-RELATED"/>
    <property type="match status" value="1"/>
</dbReference>
<dbReference type="Pfam" id="PF13489">
    <property type="entry name" value="Methyltransf_23"/>
    <property type="match status" value="1"/>
</dbReference>
<dbReference type="SUPFAM" id="SSF53335">
    <property type="entry name" value="S-adenosyl-L-methionine-dependent methyltransferases"/>
    <property type="match status" value="1"/>
</dbReference>
<organism>
    <name type="scientific">Halalkalibacterium halodurans (strain ATCC BAA-125 / DSM 18197 / FERM 7344 / JCM 9153 / C-125)</name>
    <name type="common">Bacillus halodurans</name>
    <dbReference type="NCBI Taxonomy" id="272558"/>
    <lineage>
        <taxon>Bacteria</taxon>
        <taxon>Bacillati</taxon>
        <taxon>Bacillota</taxon>
        <taxon>Bacilli</taxon>
        <taxon>Bacillales</taxon>
        <taxon>Bacillaceae</taxon>
        <taxon>Halalkalibacterium (ex Joshi et al. 2022)</taxon>
    </lineage>
</organism>
<name>BIOC_HALH5</name>
<feature type="chain" id="PRO_0000412480" description="Malonyl-[acyl-carrier protein] O-methyltransferase">
    <location>
        <begin position="1"/>
        <end position="271"/>
    </location>
</feature>
<gene>
    <name evidence="1" type="primary">bioC</name>
    <name type="ordered locus">BH3909</name>
</gene>
<evidence type="ECO:0000255" key="1">
    <source>
        <dbReference type="HAMAP-Rule" id="MF_00835"/>
    </source>
</evidence>
<reference key="1">
    <citation type="journal article" date="2000" name="Nucleic Acids Res.">
        <title>Complete genome sequence of the alkaliphilic bacterium Bacillus halodurans and genomic sequence comparison with Bacillus subtilis.</title>
        <authorList>
            <person name="Takami H."/>
            <person name="Nakasone K."/>
            <person name="Takaki Y."/>
            <person name="Maeno G."/>
            <person name="Sasaki R."/>
            <person name="Masui N."/>
            <person name="Fuji F."/>
            <person name="Hirama C."/>
            <person name="Nakamura Y."/>
            <person name="Ogasawara N."/>
            <person name="Kuhara S."/>
            <person name="Horikoshi K."/>
        </authorList>
    </citation>
    <scope>NUCLEOTIDE SEQUENCE [LARGE SCALE GENOMIC DNA]</scope>
    <source>
        <strain>ATCC BAA-125 / DSM 18197 / FERM 7344 / JCM 9153 / C-125</strain>
    </source>
</reference>
<accession>Q9K623</accession>